<accession>B2UV31</accession>
<dbReference type="EC" id="7.1.1.-" evidence="1"/>
<dbReference type="EMBL" id="CP001072">
    <property type="protein sequence ID" value="ACD48713.1"/>
    <property type="molecule type" value="Genomic_DNA"/>
</dbReference>
<dbReference type="RefSeq" id="WP_001277296.1">
    <property type="nucleotide sequence ID" value="NC_010698.2"/>
</dbReference>
<dbReference type="SMR" id="B2UV31"/>
<dbReference type="GeneID" id="93237599"/>
<dbReference type="KEGG" id="hps:HPSH_06565"/>
<dbReference type="HOGENOM" id="CLU_015134_0_1_7"/>
<dbReference type="GO" id="GO:0005886">
    <property type="term" value="C:plasma membrane"/>
    <property type="evidence" value="ECO:0007669"/>
    <property type="project" value="UniProtKB-SubCell"/>
</dbReference>
<dbReference type="GO" id="GO:0003954">
    <property type="term" value="F:NADH dehydrogenase activity"/>
    <property type="evidence" value="ECO:0007669"/>
    <property type="project" value="TreeGrafter"/>
</dbReference>
<dbReference type="GO" id="GO:0016655">
    <property type="term" value="F:oxidoreductase activity, acting on NAD(P)H, quinone or similar compound as acceptor"/>
    <property type="evidence" value="ECO:0007669"/>
    <property type="project" value="UniProtKB-UniRule"/>
</dbReference>
<dbReference type="GO" id="GO:0048038">
    <property type="term" value="F:quinone binding"/>
    <property type="evidence" value="ECO:0007669"/>
    <property type="project" value="UniProtKB-KW"/>
</dbReference>
<dbReference type="GO" id="GO:0009060">
    <property type="term" value="P:aerobic respiration"/>
    <property type="evidence" value="ECO:0007669"/>
    <property type="project" value="TreeGrafter"/>
</dbReference>
<dbReference type="HAMAP" id="MF_01350">
    <property type="entry name" value="NDH1_NuoH"/>
    <property type="match status" value="1"/>
</dbReference>
<dbReference type="InterPro" id="IPR001694">
    <property type="entry name" value="NADH_UbQ_OxRdtase_su1/FPO"/>
</dbReference>
<dbReference type="InterPro" id="IPR018086">
    <property type="entry name" value="NADH_UbQ_OxRdtase_su1_CS"/>
</dbReference>
<dbReference type="NCBIfam" id="NF004741">
    <property type="entry name" value="PRK06076.1-2"/>
    <property type="match status" value="1"/>
</dbReference>
<dbReference type="PANTHER" id="PTHR11432">
    <property type="entry name" value="NADH DEHYDROGENASE SUBUNIT 1"/>
    <property type="match status" value="1"/>
</dbReference>
<dbReference type="PANTHER" id="PTHR11432:SF3">
    <property type="entry name" value="NADH-UBIQUINONE OXIDOREDUCTASE CHAIN 1"/>
    <property type="match status" value="1"/>
</dbReference>
<dbReference type="Pfam" id="PF00146">
    <property type="entry name" value="NADHdh"/>
    <property type="match status" value="1"/>
</dbReference>
<dbReference type="PROSITE" id="PS00667">
    <property type="entry name" value="COMPLEX1_ND1_1"/>
    <property type="match status" value="1"/>
</dbReference>
<organism>
    <name type="scientific">Helicobacter pylori (strain Shi470)</name>
    <dbReference type="NCBI Taxonomy" id="512562"/>
    <lineage>
        <taxon>Bacteria</taxon>
        <taxon>Pseudomonadati</taxon>
        <taxon>Campylobacterota</taxon>
        <taxon>Epsilonproteobacteria</taxon>
        <taxon>Campylobacterales</taxon>
        <taxon>Helicobacteraceae</taxon>
        <taxon>Helicobacter</taxon>
    </lineage>
</organism>
<sequence length="329" mass="36305">MSAYIIETLIKILILVAVFSALGGFATYIERKVLAYFQRRLGPCYVGPFGLLQVAADGIKLFTKEDIIPQGANKFIFTLAPIIAMVSAFVSMAPIPFFPNFTLFGYEIKPLISDINIGFLFFLAVGAAGIYAPILAGLASNNKYSLIGSARATIQLLSFEVVSTLTILAPLMVVGSLSLVEINNYQSGGFLDWLVFKQPLAFVLFLIASYAELNRTPFDLLEHEAEIVAGYCTEYSGLKWGMFFLAEYAHLFAFSFVISIVFFGGFNAWGFIPGGIAILIKAGFFVFLSMWVRATYPHVRPDQLMNMCWKIMLPLALLNIVLTGIIILI</sequence>
<name>NUOH_HELPS</name>
<reference key="1">
    <citation type="submission" date="2008-05" db="EMBL/GenBank/DDBJ databases">
        <title>Genome sequence of Helicobacter pylori from the remote Amazon: traces of Asian ancestry of the first Americans.</title>
        <authorList>
            <person name="Kersulyte D."/>
            <person name="Kalia A."/>
            <person name="Gilman R.H."/>
            <person name="Berg D.E."/>
        </authorList>
    </citation>
    <scope>NUCLEOTIDE SEQUENCE [LARGE SCALE GENOMIC DNA]</scope>
    <source>
        <strain>Shi470</strain>
    </source>
</reference>
<evidence type="ECO:0000255" key="1">
    <source>
        <dbReference type="HAMAP-Rule" id="MF_01350"/>
    </source>
</evidence>
<proteinExistence type="inferred from homology"/>
<protein>
    <recommendedName>
        <fullName evidence="1">NADH-quinone oxidoreductase subunit H</fullName>
        <ecNumber evidence="1">7.1.1.-</ecNumber>
    </recommendedName>
    <alternativeName>
        <fullName evidence="1">NADH dehydrogenase I subunit H</fullName>
    </alternativeName>
    <alternativeName>
        <fullName evidence="1">NDH-1 subunit H</fullName>
    </alternativeName>
</protein>
<comment type="function">
    <text evidence="1">NDH-1 shuttles electrons from NADH, via FMN and iron-sulfur (Fe-S) centers, to quinones in the respiratory chain. The immediate electron acceptor for the enzyme in this species is believed to be ubiquinone. Couples the redox reaction to proton translocation (for every two electrons transferred, four hydrogen ions are translocated across the cytoplasmic membrane), and thus conserves the redox energy in a proton gradient. This subunit may bind ubiquinone.</text>
</comment>
<comment type="catalytic activity">
    <reaction evidence="1">
        <text>a quinone + NADH + 5 H(+)(in) = a quinol + NAD(+) + 4 H(+)(out)</text>
        <dbReference type="Rhea" id="RHEA:57888"/>
        <dbReference type="ChEBI" id="CHEBI:15378"/>
        <dbReference type="ChEBI" id="CHEBI:24646"/>
        <dbReference type="ChEBI" id="CHEBI:57540"/>
        <dbReference type="ChEBI" id="CHEBI:57945"/>
        <dbReference type="ChEBI" id="CHEBI:132124"/>
    </reaction>
</comment>
<comment type="subunit">
    <text evidence="1">NDH-1 is composed of 14 different subunits. Subunits NuoA, H, J, K, L, M, N constitute the membrane sector of the complex.</text>
</comment>
<comment type="subcellular location">
    <subcellularLocation>
        <location evidence="1">Cell inner membrane</location>
        <topology evidence="1">Multi-pass membrane protein</topology>
    </subcellularLocation>
</comment>
<comment type="similarity">
    <text evidence="1">Belongs to the complex I subunit 1 family.</text>
</comment>
<gene>
    <name evidence="1" type="primary">nuoH</name>
    <name type="ordered locus">HPSH_06565</name>
</gene>
<feature type="chain" id="PRO_1000143603" description="NADH-quinone oxidoreductase subunit H">
    <location>
        <begin position="1"/>
        <end position="329"/>
    </location>
</feature>
<feature type="transmembrane region" description="Helical" evidence="1">
    <location>
        <begin position="9"/>
        <end position="29"/>
    </location>
</feature>
<feature type="transmembrane region" description="Helical" evidence="1">
    <location>
        <begin position="42"/>
        <end position="62"/>
    </location>
</feature>
<feature type="transmembrane region" description="Helical" evidence="1">
    <location>
        <begin position="75"/>
        <end position="95"/>
    </location>
</feature>
<feature type="transmembrane region" description="Helical" evidence="1">
    <location>
        <begin position="117"/>
        <end position="137"/>
    </location>
</feature>
<feature type="transmembrane region" description="Helical" evidence="1">
    <location>
        <begin position="154"/>
        <end position="174"/>
    </location>
</feature>
<feature type="transmembrane region" description="Helical" evidence="1">
    <location>
        <begin position="188"/>
        <end position="208"/>
    </location>
</feature>
<feature type="transmembrane region" description="Helical" evidence="1">
    <location>
        <begin position="238"/>
        <end position="258"/>
    </location>
</feature>
<feature type="transmembrane region" description="Helical" evidence="1">
    <location>
        <begin position="269"/>
        <end position="291"/>
    </location>
</feature>
<feature type="transmembrane region" description="Helical" evidence="1">
    <location>
        <begin position="309"/>
        <end position="329"/>
    </location>
</feature>
<keyword id="KW-0997">Cell inner membrane</keyword>
<keyword id="KW-1003">Cell membrane</keyword>
<keyword id="KW-0472">Membrane</keyword>
<keyword id="KW-0520">NAD</keyword>
<keyword id="KW-0874">Quinone</keyword>
<keyword id="KW-1278">Translocase</keyword>
<keyword id="KW-0812">Transmembrane</keyword>
<keyword id="KW-1133">Transmembrane helix</keyword>
<keyword id="KW-0830">Ubiquinone</keyword>